<evidence type="ECO:0000255" key="1">
    <source>
        <dbReference type="HAMAP-Rule" id="MF_00195"/>
    </source>
</evidence>
<reference key="1">
    <citation type="submission" date="2006-08" db="EMBL/GenBank/DDBJ databases">
        <title>Complete sequence of chromosome 1 of Burkholderia cepacia AMMD.</title>
        <authorList>
            <person name="Copeland A."/>
            <person name="Lucas S."/>
            <person name="Lapidus A."/>
            <person name="Barry K."/>
            <person name="Detter J.C."/>
            <person name="Glavina del Rio T."/>
            <person name="Hammon N."/>
            <person name="Israni S."/>
            <person name="Pitluck S."/>
            <person name="Bruce D."/>
            <person name="Chain P."/>
            <person name="Malfatti S."/>
            <person name="Shin M."/>
            <person name="Vergez L."/>
            <person name="Schmutz J."/>
            <person name="Larimer F."/>
            <person name="Land M."/>
            <person name="Hauser L."/>
            <person name="Kyrpides N."/>
            <person name="Kim E."/>
            <person name="Parke J."/>
            <person name="Coenye T."/>
            <person name="Konstantinidis K."/>
            <person name="Ramette A."/>
            <person name="Tiedje J."/>
            <person name="Richardson P."/>
        </authorList>
    </citation>
    <scope>NUCLEOTIDE SEQUENCE [LARGE SCALE GENOMIC DNA]</scope>
    <source>
        <strain>ATCC BAA-244 / DSM 16087 / CCUG 44356 / LMG 19182 / AMMD</strain>
    </source>
</reference>
<comment type="function">
    <text evidence="1">GTPase that plays an essential role in the late steps of ribosome biogenesis.</text>
</comment>
<comment type="subunit">
    <text evidence="1">Associates with the 50S ribosomal subunit.</text>
</comment>
<comment type="similarity">
    <text evidence="1">Belongs to the TRAFAC class TrmE-Era-EngA-EngB-Septin-like GTPase superfamily. EngA (Der) GTPase family.</text>
</comment>
<name>DER_BURCM</name>
<proteinExistence type="inferred from homology"/>
<gene>
    <name evidence="1" type="primary">der</name>
    <name type="synonym">engA</name>
    <name type="ordered locus">Bamb_1746</name>
</gene>
<keyword id="KW-0342">GTP-binding</keyword>
<keyword id="KW-0547">Nucleotide-binding</keyword>
<keyword id="KW-0677">Repeat</keyword>
<keyword id="KW-0690">Ribosome biogenesis</keyword>
<feature type="chain" id="PRO_1000011580" description="GTPase Der">
    <location>
        <begin position="1"/>
        <end position="445"/>
    </location>
</feature>
<feature type="domain" description="EngA-type G 1">
    <location>
        <begin position="3"/>
        <end position="167"/>
    </location>
</feature>
<feature type="domain" description="EngA-type G 2">
    <location>
        <begin position="180"/>
        <end position="353"/>
    </location>
</feature>
<feature type="domain" description="KH-like" evidence="1">
    <location>
        <begin position="354"/>
        <end position="438"/>
    </location>
</feature>
<feature type="binding site" evidence="1">
    <location>
        <begin position="9"/>
        <end position="16"/>
    </location>
    <ligand>
        <name>GTP</name>
        <dbReference type="ChEBI" id="CHEBI:37565"/>
        <label>1</label>
    </ligand>
</feature>
<feature type="binding site" evidence="1">
    <location>
        <begin position="56"/>
        <end position="60"/>
    </location>
    <ligand>
        <name>GTP</name>
        <dbReference type="ChEBI" id="CHEBI:37565"/>
        <label>1</label>
    </ligand>
</feature>
<feature type="binding site" evidence="1">
    <location>
        <begin position="119"/>
        <end position="122"/>
    </location>
    <ligand>
        <name>GTP</name>
        <dbReference type="ChEBI" id="CHEBI:37565"/>
        <label>1</label>
    </ligand>
</feature>
<feature type="binding site" evidence="1">
    <location>
        <begin position="186"/>
        <end position="193"/>
    </location>
    <ligand>
        <name>GTP</name>
        <dbReference type="ChEBI" id="CHEBI:37565"/>
        <label>2</label>
    </ligand>
</feature>
<feature type="binding site" evidence="1">
    <location>
        <begin position="233"/>
        <end position="237"/>
    </location>
    <ligand>
        <name>GTP</name>
        <dbReference type="ChEBI" id="CHEBI:37565"/>
        <label>2</label>
    </ligand>
</feature>
<feature type="binding site" evidence="1">
    <location>
        <begin position="298"/>
        <end position="301"/>
    </location>
    <ligand>
        <name>GTP</name>
        <dbReference type="ChEBI" id="CHEBI:37565"/>
        <label>2</label>
    </ligand>
</feature>
<organism>
    <name type="scientific">Burkholderia ambifaria (strain ATCC BAA-244 / DSM 16087 / CCUG 44356 / LMG 19182 / AMMD)</name>
    <name type="common">Burkholderia cepacia (strain AMMD)</name>
    <dbReference type="NCBI Taxonomy" id="339670"/>
    <lineage>
        <taxon>Bacteria</taxon>
        <taxon>Pseudomonadati</taxon>
        <taxon>Pseudomonadota</taxon>
        <taxon>Betaproteobacteria</taxon>
        <taxon>Burkholderiales</taxon>
        <taxon>Burkholderiaceae</taxon>
        <taxon>Burkholderia</taxon>
        <taxon>Burkholderia cepacia complex</taxon>
    </lineage>
</organism>
<protein>
    <recommendedName>
        <fullName evidence="1">GTPase Der</fullName>
    </recommendedName>
    <alternativeName>
        <fullName evidence="1">GTP-binding protein EngA</fullName>
    </alternativeName>
</protein>
<dbReference type="EMBL" id="CP000440">
    <property type="protein sequence ID" value="ABI87302.1"/>
    <property type="molecule type" value="Genomic_DNA"/>
</dbReference>
<dbReference type="RefSeq" id="WP_006754898.1">
    <property type="nucleotide sequence ID" value="NZ_CP009798.1"/>
</dbReference>
<dbReference type="SMR" id="Q0BEX1"/>
<dbReference type="GeneID" id="93086047"/>
<dbReference type="KEGG" id="bam:Bamb_1746"/>
<dbReference type="PATRIC" id="fig|339670.21.peg.3215"/>
<dbReference type="eggNOG" id="COG1160">
    <property type="taxonomic scope" value="Bacteria"/>
</dbReference>
<dbReference type="Proteomes" id="UP000000662">
    <property type="component" value="Chromosome 1"/>
</dbReference>
<dbReference type="GO" id="GO:0016887">
    <property type="term" value="F:ATP hydrolysis activity"/>
    <property type="evidence" value="ECO:0007669"/>
    <property type="project" value="InterPro"/>
</dbReference>
<dbReference type="GO" id="GO:0005525">
    <property type="term" value="F:GTP binding"/>
    <property type="evidence" value="ECO:0007669"/>
    <property type="project" value="UniProtKB-UniRule"/>
</dbReference>
<dbReference type="GO" id="GO:0043022">
    <property type="term" value="F:ribosome binding"/>
    <property type="evidence" value="ECO:0007669"/>
    <property type="project" value="TreeGrafter"/>
</dbReference>
<dbReference type="GO" id="GO:0042254">
    <property type="term" value="P:ribosome biogenesis"/>
    <property type="evidence" value="ECO:0007669"/>
    <property type="project" value="UniProtKB-KW"/>
</dbReference>
<dbReference type="CDD" id="cd01894">
    <property type="entry name" value="EngA1"/>
    <property type="match status" value="1"/>
</dbReference>
<dbReference type="CDD" id="cd01895">
    <property type="entry name" value="EngA2"/>
    <property type="match status" value="1"/>
</dbReference>
<dbReference type="FunFam" id="3.30.300.20:FF:000004">
    <property type="entry name" value="GTPase Der"/>
    <property type="match status" value="1"/>
</dbReference>
<dbReference type="FunFam" id="3.40.50.300:FF:000040">
    <property type="entry name" value="GTPase Der"/>
    <property type="match status" value="1"/>
</dbReference>
<dbReference type="FunFam" id="3.40.50.300:FF:000057">
    <property type="entry name" value="GTPase Der"/>
    <property type="match status" value="1"/>
</dbReference>
<dbReference type="Gene3D" id="3.30.300.20">
    <property type="match status" value="1"/>
</dbReference>
<dbReference type="Gene3D" id="3.40.50.300">
    <property type="entry name" value="P-loop containing nucleotide triphosphate hydrolases"/>
    <property type="match status" value="2"/>
</dbReference>
<dbReference type="HAMAP" id="MF_00195">
    <property type="entry name" value="GTPase_Der"/>
    <property type="match status" value="1"/>
</dbReference>
<dbReference type="InterPro" id="IPR003593">
    <property type="entry name" value="AAA+_ATPase"/>
</dbReference>
<dbReference type="InterPro" id="IPR031166">
    <property type="entry name" value="G_ENGA"/>
</dbReference>
<dbReference type="InterPro" id="IPR006073">
    <property type="entry name" value="GTP-bd"/>
</dbReference>
<dbReference type="InterPro" id="IPR016484">
    <property type="entry name" value="GTPase_Der"/>
</dbReference>
<dbReference type="InterPro" id="IPR032859">
    <property type="entry name" value="KH_dom-like"/>
</dbReference>
<dbReference type="InterPro" id="IPR015946">
    <property type="entry name" value="KH_dom-like_a/b"/>
</dbReference>
<dbReference type="InterPro" id="IPR027417">
    <property type="entry name" value="P-loop_NTPase"/>
</dbReference>
<dbReference type="InterPro" id="IPR005225">
    <property type="entry name" value="Small_GTP-bd"/>
</dbReference>
<dbReference type="NCBIfam" id="TIGR03594">
    <property type="entry name" value="GTPase_EngA"/>
    <property type="match status" value="1"/>
</dbReference>
<dbReference type="NCBIfam" id="TIGR00231">
    <property type="entry name" value="small_GTP"/>
    <property type="match status" value="2"/>
</dbReference>
<dbReference type="PANTHER" id="PTHR43834">
    <property type="entry name" value="GTPASE DER"/>
    <property type="match status" value="1"/>
</dbReference>
<dbReference type="PANTHER" id="PTHR43834:SF6">
    <property type="entry name" value="GTPASE DER"/>
    <property type="match status" value="1"/>
</dbReference>
<dbReference type="Pfam" id="PF14714">
    <property type="entry name" value="KH_dom-like"/>
    <property type="match status" value="1"/>
</dbReference>
<dbReference type="Pfam" id="PF01926">
    <property type="entry name" value="MMR_HSR1"/>
    <property type="match status" value="2"/>
</dbReference>
<dbReference type="PIRSF" id="PIRSF006485">
    <property type="entry name" value="GTP-binding_EngA"/>
    <property type="match status" value="1"/>
</dbReference>
<dbReference type="PRINTS" id="PR00326">
    <property type="entry name" value="GTP1OBG"/>
</dbReference>
<dbReference type="SMART" id="SM00382">
    <property type="entry name" value="AAA"/>
    <property type="match status" value="2"/>
</dbReference>
<dbReference type="SUPFAM" id="SSF52540">
    <property type="entry name" value="P-loop containing nucleoside triphosphate hydrolases"/>
    <property type="match status" value="2"/>
</dbReference>
<dbReference type="PROSITE" id="PS51712">
    <property type="entry name" value="G_ENGA"/>
    <property type="match status" value="2"/>
</dbReference>
<sequence length="445" mass="48997">MKPVIALVGRPNVGKSTLFNRLTRSRDALVADLPGLTRDRHYGEGRVGERPYLVVDTGGFEPVAKDGILHQMARQTRQAVEEADVVVFIVDGRNGLAPQDKSIADYLRKTGRPIFLVVNKAEGMKYTAVATDFYELGLGDPRAISAAHGDGVTDMINEALEVAYAGQPEEADEDDPSRGIKIAIVGRPNVGKSTLVNALIGEDRVIAFDMPGTTRDSIYVDFERNGKKYTLIDTAGLRRRGKVFEAIEKFSVVKTLQSISDANVVILLLDAQQDISDQDAHIAGFVVEQGRALVIGVNKWDGLDDHARDRAKADLTRKLKFLDFAKSHYISAAKKTGIGALMRSVDDAYAAAMAKLPTPKLTRALIEAVEFQQPRRRGPVRPKLRYAHQGGQNPPLIVIHGNALDAVTETYKRYLENRFRETFSLTGTPLRIEFRSSNNPYADKG</sequence>
<accession>Q0BEX1</accession>